<gene>
    <name evidence="1" type="primary">rplY</name>
    <name type="ordered locus">Shewana3_1892</name>
</gene>
<organism>
    <name type="scientific">Shewanella sp. (strain ANA-3)</name>
    <dbReference type="NCBI Taxonomy" id="94122"/>
    <lineage>
        <taxon>Bacteria</taxon>
        <taxon>Pseudomonadati</taxon>
        <taxon>Pseudomonadota</taxon>
        <taxon>Gammaproteobacteria</taxon>
        <taxon>Alteromonadales</taxon>
        <taxon>Shewanellaceae</taxon>
        <taxon>Shewanella</taxon>
    </lineage>
</organism>
<sequence>MSYTIQAQTRTEIGKGSSRRLRHAGKVPAVIYGAGKEPVSIVFDHKDIINIQTNEDFYTSVVTIVLDGKEVGVRAQAMQRHAFKPMIEHVDFVYA</sequence>
<proteinExistence type="inferred from homology"/>
<evidence type="ECO:0000255" key="1">
    <source>
        <dbReference type="HAMAP-Rule" id="MF_01336"/>
    </source>
</evidence>
<evidence type="ECO:0000305" key="2"/>
<comment type="function">
    <text evidence="1">This is one of the proteins that binds to the 5S RNA in the ribosome where it forms part of the central protuberance.</text>
</comment>
<comment type="subunit">
    <text evidence="1">Part of the 50S ribosomal subunit; part of the 5S rRNA/L5/L18/L25 subcomplex. Contacts the 5S rRNA. Binds to the 5S rRNA independently of L5 and L18.</text>
</comment>
<comment type="similarity">
    <text evidence="1">Belongs to the bacterial ribosomal protein bL25 family.</text>
</comment>
<protein>
    <recommendedName>
        <fullName evidence="1">Large ribosomal subunit protein bL25</fullName>
    </recommendedName>
    <alternativeName>
        <fullName evidence="2">50S ribosomal protein L25</fullName>
    </alternativeName>
</protein>
<dbReference type="EMBL" id="CP000469">
    <property type="protein sequence ID" value="ABK48123.1"/>
    <property type="molecule type" value="Genomic_DNA"/>
</dbReference>
<dbReference type="RefSeq" id="WP_011622605.1">
    <property type="nucleotide sequence ID" value="NC_008577.1"/>
</dbReference>
<dbReference type="SMR" id="A0KWF4"/>
<dbReference type="STRING" id="94122.Shewana3_1892"/>
<dbReference type="GeneID" id="94727841"/>
<dbReference type="KEGG" id="shn:Shewana3_1892"/>
<dbReference type="eggNOG" id="COG1825">
    <property type="taxonomic scope" value="Bacteria"/>
</dbReference>
<dbReference type="HOGENOM" id="CLU_137946_0_0_6"/>
<dbReference type="OrthoDB" id="9806411at2"/>
<dbReference type="Proteomes" id="UP000002589">
    <property type="component" value="Chromosome"/>
</dbReference>
<dbReference type="GO" id="GO:0022625">
    <property type="term" value="C:cytosolic large ribosomal subunit"/>
    <property type="evidence" value="ECO:0007669"/>
    <property type="project" value="TreeGrafter"/>
</dbReference>
<dbReference type="GO" id="GO:0008097">
    <property type="term" value="F:5S rRNA binding"/>
    <property type="evidence" value="ECO:0007669"/>
    <property type="project" value="InterPro"/>
</dbReference>
<dbReference type="GO" id="GO:0003735">
    <property type="term" value="F:structural constituent of ribosome"/>
    <property type="evidence" value="ECO:0007669"/>
    <property type="project" value="InterPro"/>
</dbReference>
<dbReference type="GO" id="GO:0006412">
    <property type="term" value="P:translation"/>
    <property type="evidence" value="ECO:0007669"/>
    <property type="project" value="UniProtKB-UniRule"/>
</dbReference>
<dbReference type="CDD" id="cd00495">
    <property type="entry name" value="Ribosomal_L25_TL5_CTC"/>
    <property type="match status" value="1"/>
</dbReference>
<dbReference type="FunFam" id="2.40.240.10:FF:000002">
    <property type="entry name" value="50S ribosomal protein L25"/>
    <property type="match status" value="1"/>
</dbReference>
<dbReference type="Gene3D" id="2.40.240.10">
    <property type="entry name" value="Ribosomal Protein L25, Chain P"/>
    <property type="match status" value="1"/>
</dbReference>
<dbReference type="HAMAP" id="MF_01336">
    <property type="entry name" value="Ribosomal_bL25"/>
    <property type="match status" value="1"/>
</dbReference>
<dbReference type="InterPro" id="IPR020056">
    <property type="entry name" value="Rbsml_bL25/Gln-tRNA_synth_N"/>
</dbReference>
<dbReference type="InterPro" id="IPR011035">
    <property type="entry name" value="Ribosomal_bL25/Gln-tRNA_synth"/>
</dbReference>
<dbReference type="InterPro" id="IPR001021">
    <property type="entry name" value="Ribosomal_bL25_long"/>
</dbReference>
<dbReference type="InterPro" id="IPR020055">
    <property type="entry name" value="Ribosomal_bL25_short"/>
</dbReference>
<dbReference type="InterPro" id="IPR029751">
    <property type="entry name" value="Ribosomal_L25_dom"/>
</dbReference>
<dbReference type="InterPro" id="IPR020930">
    <property type="entry name" value="Ribosomal_uL5_bac-type"/>
</dbReference>
<dbReference type="NCBIfam" id="TIGR00731">
    <property type="entry name" value="bL25_bact_ctc"/>
    <property type="match status" value="1"/>
</dbReference>
<dbReference type="NCBIfam" id="NF004612">
    <property type="entry name" value="PRK05943.1"/>
    <property type="match status" value="1"/>
</dbReference>
<dbReference type="PANTHER" id="PTHR33284">
    <property type="entry name" value="RIBOSOMAL PROTEIN L25/GLN-TRNA SYNTHETASE, ANTI-CODON-BINDING DOMAIN-CONTAINING PROTEIN"/>
    <property type="match status" value="1"/>
</dbReference>
<dbReference type="PANTHER" id="PTHR33284:SF1">
    <property type="entry name" value="RIBOSOMAL PROTEIN L25_GLN-TRNA SYNTHETASE, ANTI-CODON-BINDING DOMAIN-CONTAINING PROTEIN"/>
    <property type="match status" value="1"/>
</dbReference>
<dbReference type="Pfam" id="PF01386">
    <property type="entry name" value="Ribosomal_L25p"/>
    <property type="match status" value="1"/>
</dbReference>
<dbReference type="SUPFAM" id="SSF50715">
    <property type="entry name" value="Ribosomal protein L25-like"/>
    <property type="match status" value="1"/>
</dbReference>
<feature type="chain" id="PRO_1000052968" description="Large ribosomal subunit protein bL25">
    <location>
        <begin position="1"/>
        <end position="95"/>
    </location>
</feature>
<reference key="1">
    <citation type="submission" date="2006-09" db="EMBL/GenBank/DDBJ databases">
        <title>Complete sequence of chromosome 1 of Shewanella sp. ANA-3.</title>
        <authorList>
            <person name="Copeland A."/>
            <person name="Lucas S."/>
            <person name="Lapidus A."/>
            <person name="Barry K."/>
            <person name="Detter J.C."/>
            <person name="Glavina del Rio T."/>
            <person name="Hammon N."/>
            <person name="Israni S."/>
            <person name="Dalin E."/>
            <person name="Tice H."/>
            <person name="Pitluck S."/>
            <person name="Chertkov O."/>
            <person name="Brettin T."/>
            <person name="Bruce D."/>
            <person name="Han C."/>
            <person name="Tapia R."/>
            <person name="Gilna P."/>
            <person name="Schmutz J."/>
            <person name="Larimer F."/>
            <person name="Land M."/>
            <person name="Hauser L."/>
            <person name="Kyrpides N."/>
            <person name="Kim E."/>
            <person name="Newman D."/>
            <person name="Salticov C."/>
            <person name="Konstantinidis K."/>
            <person name="Klappenback J."/>
            <person name="Tiedje J."/>
            <person name="Richardson P."/>
        </authorList>
    </citation>
    <scope>NUCLEOTIDE SEQUENCE [LARGE SCALE GENOMIC DNA]</scope>
    <source>
        <strain>ANA-3</strain>
    </source>
</reference>
<name>RL25_SHESA</name>
<accession>A0KWF4</accession>
<keyword id="KW-0687">Ribonucleoprotein</keyword>
<keyword id="KW-0689">Ribosomal protein</keyword>
<keyword id="KW-0694">RNA-binding</keyword>
<keyword id="KW-0699">rRNA-binding</keyword>